<gene>
    <name evidence="1" type="primary">uvrB</name>
    <name type="ordered locus">Kole_1730</name>
</gene>
<name>UVRB_KOSOT</name>
<feature type="chain" id="PRO_1000204136" description="UvrABC system protein B">
    <location>
        <begin position="1"/>
        <end position="667"/>
    </location>
</feature>
<feature type="domain" description="Helicase ATP-binding" evidence="1">
    <location>
        <begin position="24"/>
        <end position="195"/>
    </location>
</feature>
<feature type="domain" description="Helicase C-terminal" evidence="1">
    <location>
        <begin position="428"/>
        <end position="581"/>
    </location>
</feature>
<feature type="domain" description="UVR" evidence="1">
    <location>
        <begin position="626"/>
        <end position="661"/>
    </location>
</feature>
<feature type="short sequence motif" description="Beta-hairpin">
    <location>
        <begin position="90"/>
        <end position="113"/>
    </location>
</feature>
<feature type="binding site" evidence="1">
    <location>
        <begin position="37"/>
        <end position="44"/>
    </location>
    <ligand>
        <name>ATP</name>
        <dbReference type="ChEBI" id="CHEBI:30616"/>
    </ligand>
</feature>
<evidence type="ECO:0000255" key="1">
    <source>
        <dbReference type="HAMAP-Rule" id="MF_00204"/>
    </source>
</evidence>
<organism>
    <name type="scientific">Kosmotoga olearia (strain ATCC BAA-1733 / DSM 21960 / TBF 19.5.1)</name>
    <dbReference type="NCBI Taxonomy" id="521045"/>
    <lineage>
        <taxon>Bacteria</taxon>
        <taxon>Thermotogati</taxon>
        <taxon>Thermotogota</taxon>
        <taxon>Thermotogae</taxon>
        <taxon>Kosmotogales</taxon>
        <taxon>Kosmotogaceae</taxon>
        <taxon>Kosmotoga</taxon>
    </lineage>
</organism>
<sequence>MRFNLKAPFEPRGDQPEAITRLVEGLRRGDRFQTLLGVTGSGKTFTMASIIERVQQPALVISPNKALVAQLYREFRSFFPENRVELFISYYDYYQPEAYIPTKDLYIEKDADINDLLARMRISALKSVLTRKDVVVVASVSAIYASGDPRDFQELNISLEIGQRIPRNELALKLASIQYSRSEDISSGGVFHLRGDVVEIFPPYEDYGIRIYFFDDEIERIISFDPMNRKTLEEFDRIIIYPAKEFVTTEEKIKHAVKEIERDLELRAKELEKNGKYLEAQRLKQRTLYDLEMLTTLGYCSGIENYSRYFDGRKPGEPPYTILDYFDKSEMIVFLDESHITVPQIRAMYHGDHSRKKNLVEYGFRLPSAFDNRPLTFEEFLESVGQIIFVSATPGDYELSVSTQIVEQLIRPTGLIDPEVVVKPTQNQVDDFIEEVQKVIERGERALVTVLTKKAAEMFSAYLNELGIRAEYLHSELDTVERVEVLKKLREGSVDVVVGVNLLREGLDLPEVSLVAIMDADKEGFLRSETTLIQTIGRAARNINGKVLLYADRITNSMKRAIEETNRRRMKQLMYNIEHDIKPESIVKPLYENIFEEFADNEEKIEIAKNTYLDGILALKEDLEAEEYLALLEEEMWRASSELRYEDAAMLRDEMLRIKRETKKDNI</sequence>
<keyword id="KW-0067">ATP-binding</keyword>
<keyword id="KW-0963">Cytoplasm</keyword>
<keyword id="KW-0227">DNA damage</keyword>
<keyword id="KW-0228">DNA excision</keyword>
<keyword id="KW-0234">DNA repair</keyword>
<keyword id="KW-0267">Excision nuclease</keyword>
<keyword id="KW-0347">Helicase</keyword>
<keyword id="KW-0378">Hydrolase</keyword>
<keyword id="KW-0547">Nucleotide-binding</keyword>
<keyword id="KW-1185">Reference proteome</keyword>
<keyword id="KW-0742">SOS response</keyword>
<comment type="function">
    <text evidence="1">The UvrABC repair system catalyzes the recognition and processing of DNA lesions. A damage recognition complex composed of 2 UvrA and 2 UvrB subunits scans DNA for abnormalities. Upon binding of the UvrA(2)B(2) complex to a putative damaged site, the DNA wraps around one UvrB monomer. DNA wrap is dependent on ATP binding by UvrB and probably causes local melting of the DNA helix, facilitating insertion of UvrB beta-hairpin between the DNA strands. Then UvrB probes one DNA strand for the presence of a lesion. If a lesion is found the UvrA subunits dissociate and the UvrB-DNA preincision complex is formed. This complex is subsequently bound by UvrC and the second UvrB is released. If no lesion is found, the DNA wraps around the other UvrB subunit that will check the other stand for damage.</text>
</comment>
<comment type="subunit">
    <text evidence="1">Forms a heterotetramer with UvrA during the search for lesions. Interacts with UvrC in an incision complex.</text>
</comment>
<comment type="subcellular location">
    <subcellularLocation>
        <location evidence="1">Cytoplasm</location>
    </subcellularLocation>
</comment>
<comment type="domain">
    <text evidence="1">The beta-hairpin motif is involved in DNA binding.</text>
</comment>
<comment type="similarity">
    <text evidence="1">Belongs to the UvrB family.</text>
</comment>
<proteinExistence type="inferred from homology"/>
<reference key="1">
    <citation type="submission" date="2009-06" db="EMBL/GenBank/DDBJ databases">
        <title>Complete sequence of Thermotogales bacterium TBF 19.5.1.</title>
        <authorList>
            <consortium name="US DOE Joint Genome Institute"/>
            <person name="Lucas S."/>
            <person name="Copeland A."/>
            <person name="Lapidus A."/>
            <person name="Glavina del Rio T."/>
            <person name="Tice H."/>
            <person name="Bruce D."/>
            <person name="Goodwin L."/>
            <person name="Pitluck S."/>
            <person name="Chertkov O."/>
            <person name="Brettin T."/>
            <person name="Detter J.C."/>
            <person name="Han C."/>
            <person name="Schmutz J."/>
            <person name="Larimer F."/>
            <person name="Land M."/>
            <person name="Hauser L."/>
            <person name="Kyrpides N."/>
            <person name="Ovchinnikova G."/>
            <person name="Noll K."/>
        </authorList>
    </citation>
    <scope>NUCLEOTIDE SEQUENCE [LARGE SCALE GENOMIC DNA]</scope>
    <source>
        <strain>ATCC BAA-1733 / DSM 21960 / TBF 19.5.1</strain>
    </source>
</reference>
<dbReference type="EMBL" id="CP001634">
    <property type="protein sequence ID" value="ACR80416.1"/>
    <property type="molecule type" value="Genomic_DNA"/>
</dbReference>
<dbReference type="RefSeq" id="WP_015869060.1">
    <property type="nucleotide sequence ID" value="NC_012785.1"/>
</dbReference>
<dbReference type="SMR" id="C5CFR8"/>
<dbReference type="STRING" id="521045.Kole_1730"/>
<dbReference type="KEGG" id="kol:Kole_1730"/>
<dbReference type="eggNOG" id="COG0556">
    <property type="taxonomic scope" value="Bacteria"/>
</dbReference>
<dbReference type="HOGENOM" id="CLU_009621_2_1_0"/>
<dbReference type="OrthoDB" id="9806651at2"/>
<dbReference type="Proteomes" id="UP000002382">
    <property type="component" value="Chromosome"/>
</dbReference>
<dbReference type="GO" id="GO:0005737">
    <property type="term" value="C:cytoplasm"/>
    <property type="evidence" value="ECO:0007669"/>
    <property type="project" value="UniProtKB-SubCell"/>
</dbReference>
<dbReference type="GO" id="GO:0009380">
    <property type="term" value="C:excinuclease repair complex"/>
    <property type="evidence" value="ECO:0007669"/>
    <property type="project" value="InterPro"/>
</dbReference>
<dbReference type="GO" id="GO:0005524">
    <property type="term" value="F:ATP binding"/>
    <property type="evidence" value="ECO:0007669"/>
    <property type="project" value="UniProtKB-UniRule"/>
</dbReference>
<dbReference type="GO" id="GO:0016887">
    <property type="term" value="F:ATP hydrolysis activity"/>
    <property type="evidence" value="ECO:0007669"/>
    <property type="project" value="InterPro"/>
</dbReference>
<dbReference type="GO" id="GO:0003677">
    <property type="term" value="F:DNA binding"/>
    <property type="evidence" value="ECO:0007669"/>
    <property type="project" value="UniProtKB-UniRule"/>
</dbReference>
<dbReference type="GO" id="GO:0009381">
    <property type="term" value="F:excinuclease ABC activity"/>
    <property type="evidence" value="ECO:0007669"/>
    <property type="project" value="UniProtKB-UniRule"/>
</dbReference>
<dbReference type="GO" id="GO:0004386">
    <property type="term" value="F:helicase activity"/>
    <property type="evidence" value="ECO:0007669"/>
    <property type="project" value="UniProtKB-KW"/>
</dbReference>
<dbReference type="GO" id="GO:0006289">
    <property type="term" value="P:nucleotide-excision repair"/>
    <property type="evidence" value="ECO:0007669"/>
    <property type="project" value="UniProtKB-UniRule"/>
</dbReference>
<dbReference type="GO" id="GO:0009432">
    <property type="term" value="P:SOS response"/>
    <property type="evidence" value="ECO:0007669"/>
    <property type="project" value="UniProtKB-UniRule"/>
</dbReference>
<dbReference type="CDD" id="cd17916">
    <property type="entry name" value="DEXHc_UvrB"/>
    <property type="match status" value="1"/>
</dbReference>
<dbReference type="CDD" id="cd18790">
    <property type="entry name" value="SF2_C_UvrB"/>
    <property type="match status" value="1"/>
</dbReference>
<dbReference type="Gene3D" id="3.40.50.300">
    <property type="entry name" value="P-loop containing nucleotide triphosphate hydrolases"/>
    <property type="match status" value="3"/>
</dbReference>
<dbReference type="Gene3D" id="4.10.860.10">
    <property type="entry name" value="UVR domain"/>
    <property type="match status" value="1"/>
</dbReference>
<dbReference type="HAMAP" id="MF_00204">
    <property type="entry name" value="UvrB"/>
    <property type="match status" value="1"/>
</dbReference>
<dbReference type="InterPro" id="IPR006935">
    <property type="entry name" value="Helicase/UvrB_N"/>
</dbReference>
<dbReference type="InterPro" id="IPR014001">
    <property type="entry name" value="Helicase_ATP-bd"/>
</dbReference>
<dbReference type="InterPro" id="IPR001650">
    <property type="entry name" value="Helicase_C-like"/>
</dbReference>
<dbReference type="InterPro" id="IPR027417">
    <property type="entry name" value="P-loop_NTPase"/>
</dbReference>
<dbReference type="InterPro" id="IPR001943">
    <property type="entry name" value="UVR_dom"/>
</dbReference>
<dbReference type="InterPro" id="IPR036876">
    <property type="entry name" value="UVR_dom_sf"/>
</dbReference>
<dbReference type="InterPro" id="IPR004807">
    <property type="entry name" value="UvrB"/>
</dbReference>
<dbReference type="InterPro" id="IPR041471">
    <property type="entry name" value="UvrB_inter"/>
</dbReference>
<dbReference type="InterPro" id="IPR024759">
    <property type="entry name" value="UvrB_YAD/RRR_dom"/>
</dbReference>
<dbReference type="NCBIfam" id="NF003673">
    <property type="entry name" value="PRK05298.1"/>
    <property type="match status" value="1"/>
</dbReference>
<dbReference type="NCBIfam" id="TIGR00631">
    <property type="entry name" value="uvrb"/>
    <property type="match status" value="1"/>
</dbReference>
<dbReference type="PANTHER" id="PTHR24029">
    <property type="entry name" value="UVRABC SYSTEM PROTEIN B"/>
    <property type="match status" value="1"/>
</dbReference>
<dbReference type="PANTHER" id="PTHR24029:SF0">
    <property type="entry name" value="UVRABC SYSTEM PROTEIN B"/>
    <property type="match status" value="1"/>
</dbReference>
<dbReference type="Pfam" id="PF00271">
    <property type="entry name" value="Helicase_C"/>
    <property type="match status" value="1"/>
</dbReference>
<dbReference type="Pfam" id="PF04851">
    <property type="entry name" value="ResIII"/>
    <property type="match status" value="1"/>
</dbReference>
<dbReference type="Pfam" id="PF02151">
    <property type="entry name" value="UVR"/>
    <property type="match status" value="1"/>
</dbReference>
<dbReference type="Pfam" id="PF12344">
    <property type="entry name" value="UvrB"/>
    <property type="match status" value="1"/>
</dbReference>
<dbReference type="Pfam" id="PF17757">
    <property type="entry name" value="UvrB_inter"/>
    <property type="match status" value="1"/>
</dbReference>
<dbReference type="SMART" id="SM00487">
    <property type="entry name" value="DEXDc"/>
    <property type="match status" value="1"/>
</dbReference>
<dbReference type="SMART" id="SM00490">
    <property type="entry name" value="HELICc"/>
    <property type="match status" value="1"/>
</dbReference>
<dbReference type="SUPFAM" id="SSF46600">
    <property type="entry name" value="C-terminal UvrC-binding domain of UvrB"/>
    <property type="match status" value="1"/>
</dbReference>
<dbReference type="SUPFAM" id="SSF52540">
    <property type="entry name" value="P-loop containing nucleoside triphosphate hydrolases"/>
    <property type="match status" value="2"/>
</dbReference>
<dbReference type="PROSITE" id="PS51192">
    <property type="entry name" value="HELICASE_ATP_BIND_1"/>
    <property type="match status" value="1"/>
</dbReference>
<dbReference type="PROSITE" id="PS51194">
    <property type="entry name" value="HELICASE_CTER"/>
    <property type="match status" value="1"/>
</dbReference>
<dbReference type="PROSITE" id="PS50151">
    <property type="entry name" value="UVR"/>
    <property type="match status" value="1"/>
</dbReference>
<protein>
    <recommendedName>
        <fullName evidence="1">UvrABC system protein B</fullName>
        <shortName evidence="1">Protein UvrB</shortName>
    </recommendedName>
    <alternativeName>
        <fullName evidence="1">Excinuclease ABC subunit B</fullName>
    </alternativeName>
</protein>
<accession>C5CFR8</accession>